<reference key="1">
    <citation type="journal article" date="2006" name="PLoS Genet.">
        <title>The complete genome sequence and comparative genome analysis of the high pathogenicity Yersinia enterocolitica strain 8081.</title>
        <authorList>
            <person name="Thomson N.R."/>
            <person name="Howard S."/>
            <person name="Wren B.W."/>
            <person name="Holden M.T.G."/>
            <person name="Crossman L."/>
            <person name="Challis G.L."/>
            <person name="Churcher C."/>
            <person name="Mungall K."/>
            <person name="Brooks K."/>
            <person name="Chillingworth T."/>
            <person name="Feltwell T."/>
            <person name="Abdellah Z."/>
            <person name="Hauser H."/>
            <person name="Jagels K."/>
            <person name="Maddison M."/>
            <person name="Moule S."/>
            <person name="Sanders M."/>
            <person name="Whitehead S."/>
            <person name="Quail M.A."/>
            <person name="Dougan G."/>
            <person name="Parkhill J."/>
            <person name="Prentice M.B."/>
        </authorList>
    </citation>
    <scope>NUCLEOTIDE SEQUENCE [LARGE SCALE GENOMIC DNA]</scope>
    <source>
        <strain>NCTC 13174 / 8081</strain>
    </source>
</reference>
<organism>
    <name type="scientific">Yersinia enterocolitica serotype O:8 / biotype 1B (strain NCTC 13174 / 8081)</name>
    <dbReference type="NCBI Taxonomy" id="393305"/>
    <lineage>
        <taxon>Bacteria</taxon>
        <taxon>Pseudomonadati</taxon>
        <taxon>Pseudomonadota</taxon>
        <taxon>Gammaproteobacteria</taxon>
        <taxon>Enterobacterales</taxon>
        <taxon>Yersiniaceae</taxon>
        <taxon>Yersinia</taxon>
    </lineage>
</organism>
<evidence type="ECO:0000255" key="1">
    <source>
        <dbReference type="HAMAP-Rule" id="MF_00691"/>
    </source>
</evidence>
<gene>
    <name evidence="1" type="primary">pxpA</name>
    <name type="ordered locus">YE2953</name>
</gene>
<proteinExistence type="inferred from homology"/>
<comment type="function">
    <text evidence="1">Catalyzes the cleavage of 5-oxoproline to form L-glutamate coupled to the hydrolysis of ATP to ADP and inorganic phosphate.</text>
</comment>
<comment type="catalytic activity">
    <reaction evidence="1">
        <text>5-oxo-L-proline + ATP + 2 H2O = L-glutamate + ADP + phosphate + H(+)</text>
        <dbReference type="Rhea" id="RHEA:10348"/>
        <dbReference type="ChEBI" id="CHEBI:15377"/>
        <dbReference type="ChEBI" id="CHEBI:15378"/>
        <dbReference type="ChEBI" id="CHEBI:29985"/>
        <dbReference type="ChEBI" id="CHEBI:30616"/>
        <dbReference type="ChEBI" id="CHEBI:43474"/>
        <dbReference type="ChEBI" id="CHEBI:58402"/>
        <dbReference type="ChEBI" id="CHEBI:456216"/>
        <dbReference type="EC" id="3.5.2.9"/>
    </reaction>
</comment>
<comment type="subunit">
    <text evidence="1">Forms a complex composed of PxpA, PxpB and PxpC.</text>
</comment>
<comment type="similarity">
    <text evidence="1">Belongs to the LamB/PxpA family.</text>
</comment>
<feature type="chain" id="PRO_1000045231" description="5-oxoprolinase subunit A">
    <location>
        <begin position="1"/>
        <end position="245"/>
    </location>
</feature>
<keyword id="KW-0067">ATP-binding</keyword>
<keyword id="KW-0378">Hydrolase</keyword>
<keyword id="KW-0547">Nucleotide-binding</keyword>
<name>PXPA_YERE8</name>
<protein>
    <recommendedName>
        <fullName evidence="1">5-oxoprolinase subunit A</fullName>
        <shortName evidence="1">5-OPase subunit A</shortName>
        <ecNumber evidence="1">3.5.2.9</ecNumber>
    </recommendedName>
    <alternativeName>
        <fullName evidence="1">5-oxoprolinase (ATP-hydrolyzing) subunit A</fullName>
    </alternativeName>
</protein>
<sequence length="245" mass="26405">MKVDLNADLGEGCANDQALLQLVSSANIACGFHAGDAQTMRQSVRWAIEYGVAIGAHPSFPDRENFGRTAMQLPPETVYAQVVYQLGALAAIVKAEGGIMQHVKPHGMLYNQAALDPLLADAIAQAVKAVDPILRLVGLAGSELIRAGERAGLVTRQEVFADRRYQSDGTLVPRSQPDALIESDDLALSQTLAMVQRHQVQARDGSWVPVQADTVCVHGDGAHALNFARRLRDSFQQENITVTAQ</sequence>
<accession>A1JR39</accession>
<dbReference type="EC" id="3.5.2.9" evidence="1"/>
<dbReference type="EMBL" id="AM286415">
    <property type="protein sequence ID" value="CAL12991.1"/>
    <property type="molecule type" value="Genomic_DNA"/>
</dbReference>
<dbReference type="RefSeq" id="WP_011816815.1">
    <property type="nucleotide sequence ID" value="NC_008800.1"/>
</dbReference>
<dbReference type="RefSeq" id="YP_001007141.1">
    <property type="nucleotide sequence ID" value="NC_008800.1"/>
</dbReference>
<dbReference type="SMR" id="A1JR39"/>
<dbReference type="KEGG" id="yen:YE2953"/>
<dbReference type="PATRIC" id="fig|393305.7.peg.3141"/>
<dbReference type="eggNOG" id="COG1540">
    <property type="taxonomic scope" value="Bacteria"/>
</dbReference>
<dbReference type="HOGENOM" id="CLU_069535_0_0_6"/>
<dbReference type="OrthoDB" id="9773478at2"/>
<dbReference type="Proteomes" id="UP000000642">
    <property type="component" value="Chromosome"/>
</dbReference>
<dbReference type="GO" id="GO:0017168">
    <property type="term" value="F:5-oxoprolinase (ATP-hydrolyzing) activity"/>
    <property type="evidence" value="ECO:0007669"/>
    <property type="project" value="UniProtKB-UniRule"/>
</dbReference>
<dbReference type="GO" id="GO:0005524">
    <property type="term" value="F:ATP binding"/>
    <property type="evidence" value="ECO:0007669"/>
    <property type="project" value="UniProtKB-UniRule"/>
</dbReference>
<dbReference type="GO" id="GO:0005975">
    <property type="term" value="P:carbohydrate metabolic process"/>
    <property type="evidence" value="ECO:0007669"/>
    <property type="project" value="InterPro"/>
</dbReference>
<dbReference type="CDD" id="cd10800">
    <property type="entry name" value="LamB_YcsF_YbgL_like"/>
    <property type="match status" value="1"/>
</dbReference>
<dbReference type="Gene3D" id="3.20.20.370">
    <property type="entry name" value="Glycoside hydrolase/deacetylase"/>
    <property type="match status" value="1"/>
</dbReference>
<dbReference type="HAMAP" id="MF_00691">
    <property type="entry name" value="PxpA"/>
    <property type="match status" value="1"/>
</dbReference>
<dbReference type="InterPro" id="IPR011330">
    <property type="entry name" value="Glyco_hydro/deAcase_b/a-brl"/>
</dbReference>
<dbReference type="InterPro" id="IPR005501">
    <property type="entry name" value="LamB/YcsF/PxpA-like"/>
</dbReference>
<dbReference type="NCBIfam" id="NF003812">
    <property type="entry name" value="PRK05406.1-1"/>
    <property type="match status" value="1"/>
</dbReference>
<dbReference type="NCBIfam" id="NF003814">
    <property type="entry name" value="PRK05406.1-3"/>
    <property type="match status" value="1"/>
</dbReference>
<dbReference type="NCBIfam" id="NF003815">
    <property type="entry name" value="PRK05406.1-4"/>
    <property type="match status" value="1"/>
</dbReference>
<dbReference type="NCBIfam" id="NF003816">
    <property type="entry name" value="PRK05406.1-5"/>
    <property type="match status" value="1"/>
</dbReference>
<dbReference type="PANTHER" id="PTHR30292:SF0">
    <property type="entry name" value="5-OXOPROLINASE SUBUNIT A"/>
    <property type="match status" value="1"/>
</dbReference>
<dbReference type="PANTHER" id="PTHR30292">
    <property type="entry name" value="UNCHARACTERIZED PROTEIN YBGL-RELATED"/>
    <property type="match status" value="1"/>
</dbReference>
<dbReference type="Pfam" id="PF03746">
    <property type="entry name" value="LamB_YcsF"/>
    <property type="match status" value="1"/>
</dbReference>
<dbReference type="SUPFAM" id="SSF88713">
    <property type="entry name" value="Glycoside hydrolase/deacetylase"/>
    <property type="match status" value="1"/>
</dbReference>